<organism>
    <name type="scientific">Exiguobacterium sp. (strain ATCC BAA-1283 / AT1b)</name>
    <dbReference type="NCBI Taxonomy" id="360911"/>
    <lineage>
        <taxon>Bacteria</taxon>
        <taxon>Bacillati</taxon>
        <taxon>Bacillota</taxon>
        <taxon>Bacilli</taxon>
        <taxon>Bacillales</taxon>
        <taxon>Bacillales Family XII. Incertae Sedis</taxon>
        <taxon>Exiguobacterium</taxon>
    </lineage>
</organism>
<accession>C4KZM0</accession>
<keyword id="KW-0687">Ribonucleoprotein</keyword>
<keyword id="KW-0689">Ribosomal protein</keyword>
<keyword id="KW-0694">RNA-binding</keyword>
<keyword id="KW-0699">rRNA-binding</keyword>
<reference key="1">
    <citation type="journal article" date="2011" name="J. Bacteriol.">
        <title>Complete genome sequence of the Thermophilic Bacterium Exiguobacterium sp. AT1b.</title>
        <authorList>
            <person name="Vishnivetskaya T.A."/>
            <person name="Lucas S."/>
            <person name="Copeland A."/>
            <person name="Lapidus A."/>
            <person name="Glavina del Rio T."/>
            <person name="Dalin E."/>
            <person name="Tice H."/>
            <person name="Bruce D.C."/>
            <person name="Goodwin L.A."/>
            <person name="Pitluck S."/>
            <person name="Saunders E."/>
            <person name="Brettin T."/>
            <person name="Detter C."/>
            <person name="Han C."/>
            <person name="Larimer F."/>
            <person name="Land M.L."/>
            <person name="Hauser L.J."/>
            <person name="Kyrpides N.C."/>
            <person name="Ovchinnikova G."/>
            <person name="Kathariou S."/>
            <person name="Ramaley R.F."/>
            <person name="Rodrigues D.F."/>
            <person name="Hendrix C."/>
            <person name="Richardson P."/>
            <person name="Tiedje J.M."/>
        </authorList>
    </citation>
    <scope>NUCLEOTIDE SEQUENCE [LARGE SCALE GENOMIC DNA]</scope>
    <source>
        <strain>ATCC BAA-1283 / AT1b</strain>
    </source>
</reference>
<feature type="chain" id="PRO_1000214363" description="Small ribosomal subunit protein uS11">
    <location>
        <begin position="1"/>
        <end position="131"/>
    </location>
</feature>
<comment type="function">
    <text evidence="1">Located on the platform of the 30S subunit, it bridges several disparate RNA helices of the 16S rRNA. Forms part of the Shine-Dalgarno cleft in the 70S ribosome.</text>
</comment>
<comment type="subunit">
    <text evidence="1">Part of the 30S ribosomal subunit. Interacts with proteins S7 and S18. Binds to IF-3.</text>
</comment>
<comment type="similarity">
    <text evidence="1">Belongs to the universal ribosomal protein uS11 family.</text>
</comment>
<dbReference type="EMBL" id="CP001615">
    <property type="protein sequence ID" value="ACQ70533.1"/>
    <property type="molecule type" value="Genomic_DNA"/>
</dbReference>
<dbReference type="RefSeq" id="WP_012727652.1">
    <property type="nucleotide sequence ID" value="NZ_MOEL01000001.1"/>
</dbReference>
<dbReference type="SMR" id="C4KZM0"/>
<dbReference type="STRING" id="360911.EAT1b_1607"/>
<dbReference type="GeneID" id="94370769"/>
<dbReference type="KEGG" id="eat:EAT1b_1607"/>
<dbReference type="eggNOG" id="COG0100">
    <property type="taxonomic scope" value="Bacteria"/>
</dbReference>
<dbReference type="HOGENOM" id="CLU_072439_5_0_9"/>
<dbReference type="OrthoDB" id="9806415at2"/>
<dbReference type="Proteomes" id="UP000000716">
    <property type="component" value="Chromosome"/>
</dbReference>
<dbReference type="GO" id="GO:1990904">
    <property type="term" value="C:ribonucleoprotein complex"/>
    <property type="evidence" value="ECO:0007669"/>
    <property type="project" value="UniProtKB-KW"/>
</dbReference>
<dbReference type="GO" id="GO:0005840">
    <property type="term" value="C:ribosome"/>
    <property type="evidence" value="ECO:0007669"/>
    <property type="project" value="UniProtKB-KW"/>
</dbReference>
<dbReference type="GO" id="GO:0019843">
    <property type="term" value="F:rRNA binding"/>
    <property type="evidence" value="ECO:0007669"/>
    <property type="project" value="UniProtKB-UniRule"/>
</dbReference>
<dbReference type="GO" id="GO:0003735">
    <property type="term" value="F:structural constituent of ribosome"/>
    <property type="evidence" value="ECO:0007669"/>
    <property type="project" value="InterPro"/>
</dbReference>
<dbReference type="GO" id="GO:0006412">
    <property type="term" value="P:translation"/>
    <property type="evidence" value="ECO:0007669"/>
    <property type="project" value="UniProtKB-UniRule"/>
</dbReference>
<dbReference type="FunFam" id="3.30.420.80:FF:000001">
    <property type="entry name" value="30S ribosomal protein S11"/>
    <property type="match status" value="1"/>
</dbReference>
<dbReference type="Gene3D" id="3.30.420.80">
    <property type="entry name" value="Ribosomal protein S11"/>
    <property type="match status" value="1"/>
</dbReference>
<dbReference type="HAMAP" id="MF_01310">
    <property type="entry name" value="Ribosomal_uS11"/>
    <property type="match status" value="1"/>
</dbReference>
<dbReference type="InterPro" id="IPR001971">
    <property type="entry name" value="Ribosomal_uS11"/>
</dbReference>
<dbReference type="InterPro" id="IPR019981">
    <property type="entry name" value="Ribosomal_uS11_bac-type"/>
</dbReference>
<dbReference type="InterPro" id="IPR018102">
    <property type="entry name" value="Ribosomal_uS11_CS"/>
</dbReference>
<dbReference type="InterPro" id="IPR036967">
    <property type="entry name" value="Ribosomal_uS11_sf"/>
</dbReference>
<dbReference type="NCBIfam" id="NF003698">
    <property type="entry name" value="PRK05309.1"/>
    <property type="match status" value="1"/>
</dbReference>
<dbReference type="NCBIfam" id="TIGR03632">
    <property type="entry name" value="uS11_bact"/>
    <property type="match status" value="1"/>
</dbReference>
<dbReference type="PANTHER" id="PTHR11759">
    <property type="entry name" value="40S RIBOSOMAL PROTEIN S14/30S RIBOSOMAL PROTEIN S11"/>
    <property type="match status" value="1"/>
</dbReference>
<dbReference type="Pfam" id="PF00411">
    <property type="entry name" value="Ribosomal_S11"/>
    <property type="match status" value="1"/>
</dbReference>
<dbReference type="PIRSF" id="PIRSF002131">
    <property type="entry name" value="Ribosomal_S11"/>
    <property type="match status" value="1"/>
</dbReference>
<dbReference type="SUPFAM" id="SSF53137">
    <property type="entry name" value="Translational machinery components"/>
    <property type="match status" value="1"/>
</dbReference>
<dbReference type="PROSITE" id="PS00054">
    <property type="entry name" value="RIBOSOMAL_S11"/>
    <property type="match status" value="1"/>
</dbReference>
<evidence type="ECO:0000255" key="1">
    <source>
        <dbReference type="HAMAP-Rule" id="MF_01310"/>
    </source>
</evidence>
<evidence type="ECO:0000305" key="2"/>
<proteinExistence type="inferred from homology"/>
<sequence>MAKRKQNVRSKRKVKKHVEVGVVHIRSTFNNTIITITDTQGNAISWATSGNLGFKGSRKSTPFAAQMAAETAAKVAMDNGMRTVEVNVKGPGAGREAAIRALQATGLEVTAIRDVTPVPHNGCRPPKRRRV</sequence>
<gene>
    <name evidence="1" type="primary">rpsK</name>
    <name type="ordered locus">EAT1b_1607</name>
</gene>
<protein>
    <recommendedName>
        <fullName evidence="1">Small ribosomal subunit protein uS11</fullName>
    </recommendedName>
    <alternativeName>
        <fullName evidence="2">30S ribosomal protein S11</fullName>
    </alternativeName>
</protein>
<name>RS11_EXISA</name>